<reference key="1">
    <citation type="journal article" date="2006" name="Mol. Microbiol.">
        <title>Role of pathogenicity island-associated integrases in the genome plasticity of uropathogenic Escherichia coli strain 536.</title>
        <authorList>
            <person name="Hochhut B."/>
            <person name="Wilde C."/>
            <person name="Balling G."/>
            <person name="Middendorf B."/>
            <person name="Dobrindt U."/>
            <person name="Brzuszkiewicz E."/>
            <person name="Gottschalk G."/>
            <person name="Carniel E."/>
            <person name="Hacker J."/>
        </authorList>
    </citation>
    <scope>NUCLEOTIDE SEQUENCE [LARGE SCALE GENOMIC DNA]</scope>
    <source>
        <strain>536 / UPEC</strain>
    </source>
</reference>
<sequence>MDKFRVQGPTKLQGEVTISGAKNAALPILFAALLAEEPVEIQNVPKLKDVDTSMKLLSQLGAKVERNGSVHIDARDVNVFCAPYDLVKTMRASIWALGPLVARFGQGQVSLPGGCTIGARPVDLHISGLEQLGATIKLEEGYVKASVDGRLKGAHIVMDKVSVGATVTIMCAATLAEGTTIIENAAREPEIVDTANFLITLGAKISGQGTDRIVIEGVERLGGGVYRVLPDRIETGTFLVAAAISRGKIICRNAQPDTLDAVLAKLRDAGADIEVGEDWISLDMHGKRPKAVNVRTAPHPAFPTDMQAQFTLLNLVAEGTGFITETVFENRFMHVPELSRMGAHAEIESNTVICHGVEKLSGAQVMATDLRASASLVLAGCIAEGTTVVDRIYHIDRGYERIEDKLRALGANIERVKGE</sequence>
<organism>
    <name type="scientific">Escherichia coli O6:K15:H31 (strain 536 / UPEC)</name>
    <dbReference type="NCBI Taxonomy" id="362663"/>
    <lineage>
        <taxon>Bacteria</taxon>
        <taxon>Pseudomonadati</taxon>
        <taxon>Pseudomonadota</taxon>
        <taxon>Gammaproteobacteria</taxon>
        <taxon>Enterobacterales</taxon>
        <taxon>Enterobacteriaceae</taxon>
        <taxon>Escherichia</taxon>
    </lineage>
</organism>
<gene>
    <name evidence="1" type="primary">murA</name>
    <name type="ordered locus">ECP_3276</name>
</gene>
<comment type="function">
    <text evidence="1">Cell wall formation. Adds enolpyruvyl to UDP-N-acetylglucosamine.</text>
</comment>
<comment type="catalytic activity">
    <reaction evidence="1">
        <text>phosphoenolpyruvate + UDP-N-acetyl-alpha-D-glucosamine = UDP-N-acetyl-3-O-(1-carboxyvinyl)-alpha-D-glucosamine + phosphate</text>
        <dbReference type="Rhea" id="RHEA:18681"/>
        <dbReference type="ChEBI" id="CHEBI:43474"/>
        <dbReference type="ChEBI" id="CHEBI:57705"/>
        <dbReference type="ChEBI" id="CHEBI:58702"/>
        <dbReference type="ChEBI" id="CHEBI:68483"/>
        <dbReference type="EC" id="2.5.1.7"/>
    </reaction>
</comment>
<comment type="pathway">
    <text evidence="1">Cell wall biogenesis; peptidoglycan biosynthesis.</text>
</comment>
<comment type="subcellular location">
    <subcellularLocation>
        <location evidence="1">Cytoplasm</location>
    </subcellularLocation>
</comment>
<comment type="similarity">
    <text evidence="1">Belongs to the EPSP synthase family. MurA subfamily.</text>
</comment>
<protein>
    <recommendedName>
        <fullName evidence="1">UDP-N-acetylglucosamine 1-carboxyvinyltransferase</fullName>
        <ecNumber evidence="1">2.5.1.7</ecNumber>
    </recommendedName>
    <alternativeName>
        <fullName evidence="1">Enoylpyruvate transferase</fullName>
    </alternativeName>
    <alternativeName>
        <fullName evidence="1">UDP-N-acetylglucosamine enolpyruvyl transferase</fullName>
        <shortName evidence="1">EPT</shortName>
    </alternativeName>
</protein>
<evidence type="ECO:0000255" key="1">
    <source>
        <dbReference type="HAMAP-Rule" id="MF_00111"/>
    </source>
</evidence>
<keyword id="KW-0131">Cell cycle</keyword>
<keyword id="KW-0132">Cell division</keyword>
<keyword id="KW-0133">Cell shape</keyword>
<keyword id="KW-0961">Cell wall biogenesis/degradation</keyword>
<keyword id="KW-0963">Cytoplasm</keyword>
<keyword id="KW-0573">Peptidoglycan synthesis</keyword>
<keyword id="KW-0670">Pyruvate</keyword>
<keyword id="KW-0808">Transferase</keyword>
<dbReference type="EC" id="2.5.1.7" evidence="1"/>
<dbReference type="EMBL" id="CP000247">
    <property type="protein sequence ID" value="ABG71258.1"/>
    <property type="molecule type" value="Genomic_DNA"/>
</dbReference>
<dbReference type="RefSeq" id="WP_000357259.1">
    <property type="nucleotide sequence ID" value="NC_008253.1"/>
</dbReference>
<dbReference type="SMR" id="Q0TCS1"/>
<dbReference type="GeneID" id="93778792"/>
<dbReference type="KEGG" id="ecp:ECP_3276"/>
<dbReference type="HOGENOM" id="CLU_027387_0_0_6"/>
<dbReference type="UniPathway" id="UPA00219"/>
<dbReference type="Proteomes" id="UP000009182">
    <property type="component" value="Chromosome"/>
</dbReference>
<dbReference type="GO" id="GO:0005737">
    <property type="term" value="C:cytoplasm"/>
    <property type="evidence" value="ECO:0007669"/>
    <property type="project" value="UniProtKB-SubCell"/>
</dbReference>
<dbReference type="GO" id="GO:0008760">
    <property type="term" value="F:UDP-N-acetylglucosamine 1-carboxyvinyltransferase activity"/>
    <property type="evidence" value="ECO:0007669"/>
    <property type="project" value="UniProtKB-UniRule"/>
</dbReference>
<dbReference type="GO" id="GO:0051301">
    <property type="term" value="P:cell division"/>
    <property type="evidence" value="ECO:0007669"/>
    <property type="project" value="UniProtKB-KW"/>
</dbReference>
<dbReference type="GO" id="GO:0071555">
    <property type="term" value="P:cell wall organization"/>
    <property type="evidence" value="ECO:0007669"/>
    <property type="project" value="UniProtKB-KW"/>
</dbReference>
<dbReference type="GO" id="GO:0009252">
    <property type="term" value="P:peptidoglycan biosynthetic process"/>
    <property type="evidence" value="ECO:0007669"/>
    <property type="project" value="UniProtKB-UniRule"/>
</dbReference>
<dbReference type="GO" id="GO:0008360">
    <property type="term" value="P:regulation of cell shape"/>
    <property type="evidence" value="ECO:0007669"/>
    <property type="project" value="UniProtKB-KW"/>
</dbReference>
<dbReference type="GO" id="GO:0019277">
    <property type="term" value="P:UDP-N-acetylgalactosamine biosynthetic process"/>
    <property type="evidence" value="ECO:0007669"/>
    <property type="project" value="InterPro"/>
</dbReference>
<dbReference type="CDD" id="cd01555">
    <property type="entry name" value="UdpNAET"/>
    <property type="match status" value="1"/>
</dbReference>
<dbReference type="FunFam" id="3.65.10.10:FF:000002">
    <property type="entry name" value="UDP-N-acetylglucosamine 1-carboxyvinyltransferase"/>
    <property type="match status" value="1"/>
</dbReference>
<dbReference type="Gene3D" id="3.65.10.10">
    <property type="entry name" value="Enolpyruvate transferase domain"/>
    <property type="match status" value="2"/>
</dbReference>
<dbReference type="HAMAP" id="MF_00111">
    <property type="entry name" value="MurA"/>
    <property type="match status" value="1"/>
</dbReference>
<dbReference type="InterPro" id="IPR001986">
    <property type="entry name" value="Enolpyruvate_Tfrase_dom"/>
</dbReference>
<dbReference type="InterPro" id="IPR036968">
    <property type="entry name" value="Enolpyruvate_Tfrase_sf"/>
</dbReference>
<dbReference type="InterPro" id="IPR050068">
    <property type="entry name" value="MurA_subfamily"/>
</dbReference>
<dbReference type="InterPro" id="IPR013792">
    <property type="entry name" value="RNA3'P_cycl/enolpyr_Trfase_a/b"/>
</dbReference>
<dbReference type="InterPro" id="IPR005750">
    <property type="entry name" value="UDP_GlcNAc_COvinyl_MurA"/>
</dbReference>
<dbReference type="NCBIfam" id="TIGR01072">
    <property type="entry name" value="murA"/>
    <property type="match status" value="1"/>
</dbReference>
<dbReference type="NCBIfam" id="NF006873">
    <property type="entry name" value="PRK09369.1"/>
    <property type="match status" value="1"/>
</dbReference>
<dbReference type="PANTHER" id="PTHR43783">
    <property type="entry name" value="UDP-N-ACETYLGLUCOSAMINE 1-CARBOXYVINYLTRANSFERASE"/>
    <property type="match status" value="1"/>
</dbReference>
<dbReference type="PANTHER" id="PTHR43783:SF1">
    <property type="entry name" value="UDP-N-ACETYLGLUCOSAMINE 1-CARBOXYVINYLTRANSFERASE"/>
    <property type="match status" value="1"/>
</dbReference>
<dbReference type="Pfam" id="PF00275">
    <property type="entry name" value="EPSP_synthase"/>
    <property type="match status" value="1"/>
</dbReference>
<dbReference type="SUPFAM" id="SSF55205">
    <property type="entry name" value="EPT/RTPC-like"/>
    <property type="match status" value="1"/>
</dbReference>
<name>MURA_ECOL5</name>
<accession>Q0TCS1</accession>
<feature type="chain" id="PRO_1000023034" description="UDP-N-acetylglucosamine 1-carboxyvinyltransferase">
    <location>
        <begin position="1"/>
        <end position="419"/>
    </location>
</feature>
<feature type="active site" description="Proton donor" evidence="1">
    <location>
        <position position="115"/>
    </location>
</feature>
<feature type="binding site" evidence="1">
    <location>
        <begin position="22"/>
        <end position="23"/>
    </location>
    <ligand>
        <name>phosphoenolpyruvate</name>
        <dbReference type="ChEBI" id="CHEBI:58702"/>
    </ligand>
</feature>
<feature type="binding site" evidence="1">
    <location>
        <position position="91"/>
    </location>
    <ligand>
        <name>UDP-N-acetyl-alpha-D-glucosamine</name>
        <dbReference type="ChEBI" id="CHEBI:57705"/>
    </ligand>
</feature>
<feature type="binding site" evidence="1">
    <location>
        <begin position="120"/>
        <end position="124"/>
    </location>
    <ligand>
        <name>UDP-N-acetyl-alpha-D-glucosamine</name>
        <dbReference type="ChEBI" id="CHEBI:57705"/>
    </ligand>
</feature>
<feature type="binding site" evidence="1">
    <location>
        <begin position="160"/>
        <end position="163"/>
    </location>
    <ligand>
        <name>UDP-N-acetyl-alpha-D-glucosamine</name>
        <dbReference type="ChEBI" id="CHEBI:57705"/>
    </ligand>
</feature>
<feature type="binding site" evidence="1">
    <location>
        <position position="305"/>
    </location>
    <ligand>
        <name>UDP-N-acetyl-alpha-D-glucosamine</name>
        <dbReference type="ChEBI" id="CHEBI:57705"/>
    </ligand>
</feature>
<feature type="binding site" evidence="1">
    <location>
        <position position="327"/>
    </location>
    <ligand>
        <name>UDP-N-acetyl-alpha-D-glucosamine</name>
        <dbReference type="ChEBI" id="CHEBI:57705"/>
    </ligand>
</feature>
<feature type="modified residue" description="2-(S-cysteinyl)pyruvic acid O-phosphothioketal" evidence="1">
    <location>
        <position position="115"/>
    </location>
</feature>
<proteinExistence type="inferred from homology"/>